<accession>A4VV23</accession>
<evidence type="ECO:0000255" key="1">
    <source>
        <dbReference type="HAMAP-Rule" id="MF_00052"/>
    </source>
</evidence>
<evidence type="ECO:0000255" key="2">
    <source>
        <dbReference type="PROSITE-ProRule" id="PRU01319"/>
    </source>
</evidence>
<keyword id="KW-0963">Cytoplasm</keyword>
<keyword id="KW-0255">Endonuclease</keyword>
<keyword id="KW-0378">Hydrolase</keyword>
<keyword id="KW-0464">Manganese</keyword>
<keyword id="KW-0479">Metal-binding</keyword>
<keyword id="KW-0540">Nuclease</keyword>
<proteinExistence type="inferred from homology"/>
<dbReference type="EC" id="3.1.26.4" evidence="1"/>
<dbReference type="EMBL" id="CP000407">
    <property type="protein sequence ID" value="ABP89962.1"/>
    <property type="molecule type" value="Genomic_DNA"/>
</dbReference>
<dbReference type="SMR" id="A4VV23"/>
<dbReference type="STRING" id="391295.SSU05_0996"/>
<dbReference type="KEGG" id="ssu:SSU05_0996"/>
<dbReference type="eggNOG" id="COG0164">
    <property type="taxonomic scope" value="Bacteria"/>
</dbReference>
<dbReference type="HOGENOM" id="CLU_036532_2_1_9"/>
<dbReference type="GO" id="GO:0005737">
    <property type="term" value="C:cytoplasm"/>
    <property type="evidence" value="ECO:0007669"/>
    <property type="project" value="UniProtKB-SubCell"/>
</dbReference>
<dbReference type="GO" id="GO:0032299">
    <property type="term" value="C:ribonuclease H2 complex"/>
    <property type="evidence" value="ECO:0007669"/>
    <property type="project" value="TreeGrafter"/>
</dbReference>
<dbReference type="GO" id="GO:0030145">
    <property type="term" value="F:manganese ion binding"/>
    <property type="evidence" value="ECO:0007669"/>
    <property type="project" value="UniProtKB-UniRule"/>
</dbReference>
<dbReference type="GO" id="GO:0003723">
    <property type="term" value="F:RNA binding"/>
    <property type="evidence" value="ECO:0007669"/>
    <property type="project" value="InterPro"/>
</dbReference>
<dbReference type="GO" id="GO:0004523">
    <property type="term" value="F:RNA-DNA hybrid ribonuclease activity"/>
    <property type="evidence" value="ECO:0007669"/>
    <property type="project" value="UniProtKB-UniRule"/>
</dbReference>
<dbReference type="GO" id="GO:0043137">
    <property type="term" value="P:DNA replication, removal of RNA primer"/>
    <property type="evidence" value="ECO:0007669"/>
    <property type="project" value="TreeGrafter"/>
</dbReference>
<dbReference type="GO" id="GO:0006298">
    <property type="term" value="P:mismatch repair"/>
    <property type="evidence" value="ECO:0007669"/>
    <property type="project" value="TreeGrafter"/>
</dbReference>
<dbReference type="CDD" id="cd07182">
    <property type="entry name" value="RNase_HII_bacteria_HII_like"/>
    <property type="match status" value="1"/>
</dbReference>
<dbReference type="FunFam" id="3.30.420.10:FF:000006">
    <property type="entry name" value="Ribonuclease HII"/>
    <property type="match status" value="1"/>
</dbReference>
<dbReference type="Gene3D" id="3.30.420.10">
    <property type="entry name" value="Ribonuclease H-like superfamily/Ribonuclease H"/>
    <property type="match status" value="1"/>
</dbReference>
<dbReference type="HAMAP" id="MF_00052_B">
    <property type="entry name" value="RNase_HII_B"/>
    <property type="match status" value="1"/>
</dbReference>
<dbReference type="InterPro" id="IPR022898">
    <property type="entry name" value="RNase_HII"/>
</dbReference>
<dbReference type="InterPro" id="IPR001352">
    <property type="entry name" value="RNase_HII/HIII"/>
</dbReference>
<dbReference type="InterPro" id="IPR024567">
    <property type="entry name" value="RNase_HII/HIII_dom"/>
</dbReference>
<dbReference type="InterPro" id="IPR012337">
    <property type="entry name" value="RNaseH-like_sf"/>
</dbReference>
<dbReference type="InterPro" id="IPR036397">
    <property type="entry name" value="RNaseH_sf"/>
</dbReference>
<dbReference type="NCBIfam" id="NF000594">
    <property type="entry name" value="PRK00015.1-1"/>
    <property type="match status" value="1"/>
</dbReference>
<dbReference type="NCBIfam" id="NF000595">
    <property type="entry name" value="PRK00015.1-3"/>
    <property type="match status" value="1"/>
</dbReference>
<dbReference type="PANTHER" id="PTHR10954">
    <property type="entry name" value="RIBONUCLEASE H2 SUBUNIT A"/>
    <property type="match status" value="1"/>
</dbReference>
<dbReference type="PANTHER" id="PTHR10954:SF18">
    <property type="entry name" value="RIBONUCLEASE HII"/>
    <property type="match status" value="1"/>
</dbReference>
<dbReference type="Pfam" id="PF01351">
    <property type="entry name" value="RNase_HII"/>
    <property type="match status" value="1"/>
</dbReference>
<dbReference type="SUPFAM" id="SSF53098">
    <property type="entry name" value="Ribonuclease H-like"/>
    <property type="match status" value="1"/>
</dbReference>
<dbReference type="PROSITE" id="PS51975">
    <property type="entry name" value="RNASE_H_2"/>
    <property type="match status" value="1"/>
</dbReference>
<gene>
    <name evidence="1" type="primary">rnhB</name>
    <name type="ordered locus">SSU05_0996</name>
</gene>
<feature type="chain" id="PRO_1000031218" description="Ribonuclease HII">
    <location>
        <begin position="1"/>
        <end position="257"/>
    </location>
</feature>
<feature type="domain" description="RNase H type-2" evidence="2">
    <location>
        <begin position="70"/>
        <end position="257"/>
    </location>
</feature>
<feature type="binding site" evidence="1">
    <location>
        <position position="76"/>
    </location>
    <ligand>
        <name>a divalent metal cation</name>
        <dbReference type="ChEBI" id="CHEBI:60240"/>
    </ligand>
</feature>
<feature type="binding site" evidence="1">
    <location>
        <position position="77"/>
    </location>
    <ligand>
        <name>a divalent metal cation</name>
        <dbReference type="ChEBI" id="CHEBI:60240"/>
    </ligand>
</feature>
<feature type="binding site" evidence="1">
    <location>
        <position position="168"/>
    </location>
    <ligand>
        <name>a divalent metal cation</name>
        <dbReference type="ChEBI" id="CHEBI:60240"/>
    </ligand>
</feature>
<protein>
    <recommendedName>
        <fullName evidence="1">Ribonuclease HII</fullName>
        <shortName evidence="1">RNase HII</shortName>
        <ecNumber evidence="1">3.1.26.4</ecNumber>
    </recommendedName>
</protein>
<organism>
    <name type="scientific">Streptococcus suis (strain 05ZYH33)</name>
    <dbReference type="NCBI Taxonomy" id="391295"/>
    <lineage>
        <taxon>Bacteria</taxon>
        <taxon>Bacillati</taxon>
        <taxon>Bacillota</taxon>
        <taxon>Bacilli</taxon>
        <taxon>Lactobacillales</taxon>
        <taxon>Streptococcaceae</taxon>
        <taxon>Streptococcus</taxon>
    </lineage>
</organism>
<name>RNH2_STRSY</name>
<reference key="1">
    <citation type="journal article" date="2007" name="PLoS ONE">
        <title>A glimpse of streptococcal toxic shock syndrome from comparative genomics of S. suis 2 Chinese isolates.</title>
        <authorList>
            <person name="Chen C."/>
            <person name="Tang J."/>
            <person name="Dong W."/>
            <person name="Wang C."/>
            <person name="Feng Y."/>
            <person name="Wang J."/>
            <person name="Zheng F."/>
            <person name="Pan X."/>
            <person name="Liu D."/>
            <person name="Li M."/>
            <person name="Song Y."/>
            <person name="Zhu X."/>
            <person name="Sun H."/>
            <person name="Feng T."/>
            <person name="Guo Z."/>
            <person name="Ju A."/>
            <person name="Ge J."/>
            <person name="Dong Y."/>
            <person name="Sun W."/>
            <person name="Jiang Y."/>
            <person name="Wang J."/>
            <person name="Yan J."/>
            <person name="Yang H."/>
            <person name="Wang X."/>
            <person name="Gao G.F."/>
            <person name="Yang R."/>
            <person name="Wang J."/>
            <person name="Yu J."/>
        </authorList>
    </citation>
    <scope>NUCLEOTIDE SEQUENCE [LARGE SCALE GENOMIC DNA]</scope>
    <source>
        <strain>05ZYH33</strain>
    </source>
</reference>
<comment type="function">
    <text evidence="1">Endonuclease that specifically degrades the RNA of RNA-DNA hybrids.</text>
</comment>
<comment type="catalytic activity">
    <reaction evidence="1">
        <text>Endonucleolytic cleavage to 5'-phosphomonoester.</text>
        <dbReference type="EC" id="3.1.26.4"/>
    </reaction>
</comment>
<comment type="cofactor">
    <cofactor evidence="1">
        <name>Mn(2+)</name>
        <dbReference type="ChEBI" id="CHEBI:29035"/>
    </cofactor>
    <cofactor evidence="1">
        <name>Mg(2+)</name>
        <dbReference type="ChEBI" id="CHEBI:18420"/>
    </cofactor>
    <text evidence="1">Manganese or magnesium. Binds 1 divalent metal ion per monomer in the absence of substrate. May bind a second metal ion after substrate binding.</text>
</comment>
<comment type="subcellular location">
    <subcellularLocation>
        <location evidence="1">Cytoplasm</location>
    </subcellularLocation>
</comment>
<comment type="similarity">
    <text evidence="1">Belongs to the RNase HII family.</text>
</comment>
<sequence length="257" mass="27912">MATIKEVTALLAQVDSLDSPVWDQLAQDERAGVQAAIKKRRKELEKEAVEDARLEAMLFYEKSLYENGVEFIAGIDEVGRGPLAGPVVAAAVILPKGCKIRYLNDSKKIPKSKHEAIYQEVMERAVAVGVGIKDAALIDEVNIYEATKLAMLEALGKLSQKPDHLLIDAMKLDTPIPQTSIIKGDANSLSIAAASIVAKVTRDKMMADYDKEFSGYGFAKNAGYGTTEHLEGLNKLGITPIHRKTFEPIKSMVAGGN</sequence>